<evidence type="ECO:0000255" key="1">
    <source>
        <dbReference type="HAMAP-Rule" id="MF_01379"/>
    </source>
</evidence>
<evidence type="ECO:0000305" key="2"/>
<proteinExistence type="inferred from homology"/>
<organism>
    <name type="scientific">Microcystis aeruginosa</name>
    <dbReference type="NCBI Taxonomy" id="1126"/>
    <lineage>
        <taxon>Bacteria</taxon>
        <taxon>Bacillati</taxon>
        <taxon>Cyanobacteriota</taxon>
        <taxon>Cyanophyceae</taxon>
        <taxon>Oscillatoriophycideae</taxon>
        <taxon>Chroococcales</taxon>
        <taxon>Microcystaceae</taxon>
        <taxon>Microcystis</taxon>
    </lineage>
</organism>
<feature type="chain" id="PRO_0000090482" description="Photosystem II protein D1" evidence="1">
    <location>
        <begin position="1"/>
        <end position="344"/>
    </location>
</feature>
<feature type="propeptide" id="PRO_0000316353" evidence="1">
    <location>
        <begin position="345"/>
        <end position="360"/>
    </location>
</feature>
<feature type="transmembrane region" description="Helical" evidence="1">
    <location>
        <begin position="29"/>
        <end position="46"/>
    </location>
</feature>
<feature type="transmembrane region" description="Helical" evidence="1">
    <location>
        <begin position="118"/>
        <end position="133"/>
    </location>
</feature>
<feature type="transmembrane region" description="Helical" evidence="1">
    <location>
        <begin position="142"/>
        <end position="156"/>
    </location>
</feature>
<feature type="transmembrane region" description="Helical" evidence="1">
    <location>
        <begin position="197"/>
        <end position="218"/>
    </location>
</feature>
<feature type="transmembrane region" description="Helical" evidence="1">
    <location>
        <begin position="274"/>
        <end position="288"/>
    </location>
</feature>
<feature type="binding site" description="axial binding residue" evidence="1">
    <location>
        <position position="118"/>
    </location>
    <ligand>
        <name>chlorophyll a</name>
        <dbReference type="ChEBI" id="CHEBI:58416"/>
        <label>ChlzD1</label>
    </ligand>
    <ligandPart>
        <name>Mg</name>
        <dbReference type="ChEBI" id="CHEBI:25107"/>
    </ligandPart>
</feature>
<feature type="binding site" evidence="1">
    <location>
        <position position="126"/>
    </location>
    <ligand>
        <name>pheophytin a</name>
        <dbReference type="ChEBI" id="CHEBI:136840"/>
        <label>D1</label>
    </ligand>
</feature>
<feature type="binding site" evidence="1">
    <location>
        <position position="170"/>
    </location>
    <ligand>
        <name>[CaMn4O5] cluster</name>
        <dbReference type="ChEBI" id="CHEBI:189552"/>
    </ligand>
</feature>
<feature type="binding site" evidence="1">
    <location>
        <position position="189"/>
    </location>
    <ligand>
        <name>[CaMn4O5] cluster</name>
        <dbReference type="ChEBI" id="CHEBI:189552"/>
    </ligand>
</feature>
<feature type="binding site" description="axial binding residue" evidence="1">
    <location>
        <position position="198"/>
    </location>
    <ligand>
        <name>chlorophyll a</name>
        <dbReference type="ChEBI" id="CHEBI:58416"/>
        <label>PD1</label>
    </ligand>
    <ligandPart>
        <name>Mg</name>
        <dbReference type="ChEBI" id="CHEBI:25107"/>
    </ligandPart>
</feature>
<feature type="binding site" evidence="1">
    <location>
        <position position="215"/>
    </location>
    <ligand>
        <name>a quinone</name>
        <dbReference type="ChEBI" id="CHEBI:132124"/>
        <label>B</label>
    </ligand>
</feature>
<feature type="binding site" evidence="1">
    <location>
        <position position="215"/>
    </location>
    <ligand>
        <name>Fe cation</name>
        <dbReference type="ChEBI" id="CHEBI:24875"/>
        <note>ligand shared with heterodimeric partner</note>
    </ligand>
</feature>
<feature type="binding site" evidence="1">
    <location>
        <begin position="264"/>
        <end position="265"/>
    </location>
    <ligand>
        <name>a quinone</name>
        <dbReference type="ChEBI" id="CHEBI:132124"/>
        <label>B</label>
    </ligand>
</feature>
<feature type="binding site" evidence="1">
    <location>
        <position position="272"/>
    </location>
    <ligand>
        <name>Fe cation</name>
        <dbReference type="ChEBI" id="CHEBI:24875"/>
        <note>ligand shared with heterodimeric partner</note>
    </ligand>
</feature>
<feature type="binding site" evidence="1">
    <location>
        <position position="332"/>
    </location>
    <ligand>
        <name>[CaMn4O5] cluster</name>
        <dbReference type="ChEBI" id="CHEBI:189552"/>
    </ligand>
</feature>
<feature type="binding site" evidence="1">
    <location>
        <position position="333"/>
    </location>
    <ligand>
        <name>[CaMn4O5] cluster</name>
        <dbReference type="ChEBI" id="CHEBI:189552"/>
    </ligand>
</feature>
<feature type="binding site" evidence="1">
    <location>
        <position position="342"/>
    </location>
    <ligand>
        <name>[CaMn4O5] cluster</name>
        <dbReference type="ChEBI" id="CHEBI:189552"/>
    </ligand>
</feature>
<feature type="binding site" evidence="1">
    <location>
        <position position="344"/>
    </location>
    <ligand>
        <name>[CaMn4O5] cluster</name>
        <dbReference type="ChEBI" id="CHEBI:189552"/>
    </ligand>
</feature>
<feature type="site" description="Tyrosine radical intermediate" evidence="1">
    <location>
        <position position="161"/>
    </location>
</feature>
<feature type="site" description="Stabilizes free radical intermediate" evidence="1">
    <location>
        <position position="190"/>
    </location>
</feature>
<feature type="site" description="Cleavage; by CtpA" evidence="1">
    <location>
        <begin position="344"/>
        <end position="345"/>
    </location>
</feature>
<accession>P51764</accession>
<sequence>MTTTLQQRESASLWEQFCQWITSTNNRLYVGWFGVIMIPTLLTATTCFIIAFIAAPPVDIDGIREPVAGSLLYGNNIISGAVVPSSNAIGLHFYPIWEAASLDEWLYNGGPYQLVIFHFLLGVFCYLGRQWELSFRLGMRPWICVAYSAPVSAATAVFLIYPIGQGSFSDGMPLGISGTFNFMFVFQAEHNILMHPFHMLGVAGVFGGSLFSAMHGSLVTSSLVRETTEIESQNYGYKFGQEEETYNIVAAHGYFGRLIFQYASFNNSRSLHFFLGAWPVIGIWFTAMGVSTMAFNLNGFNFNQSILDSQGRVIGTWVDVLNRAGIGMEVMHERNAHNFPLDLASGEQAPVALTAPAING</sequence>
<name>PSBA_MICAE</name>
<reference key="1">
    <citation type="journal article" date="1996" name="J. Gen. Appl. Microbiol.">
        <title>Light-responsive and rhythmic gene expression of psbA2 in cyanobacterium Microcystis aeruginosa K-81.</title>
        <authorList>
            <person name="Sato M."/>
            <person name="Shibato J."/>
            <person name="Aida T."/>
            <person name="Asayama M."/>
            <person name="Shirai M."/>
        </authorList>
    </citation>
    <scope>NUCLEOTIDE SEQUENCE [GENOMIC DNA]</scope>
    <source>
        <strain>K-81</strain>
    </source>
</reference>
<dbReference type="EC" id="1.10.3.9" evidence="1"/>
<dbReference type="EMBL" id="D84228">
    <property type="protein sequence ID" value="BAA12284.1"/>
    <property type="molecule type" value="Genomic_DNA"/>
</dbReference>
<dbReference type="SMR" id="P51764"/>
<dbReference type="GO" id="GO:0009523">
    <property type="term" value="C:photosystem II"/>
    <property type="evidence" value="ECO:0007669"/>
    <property type="project" value="UniProtKB-KW"/>
</dbReference>
<dbReference type="GO" id="GO:0031676">
    <property type="term" value="C:plasma membrane-derived thylakoid membrane"/>
    <property type="evidence" value="ECO:0007669"/>
    <property type="project" value="UniProtKB-SubCell"/>
</dbReference>
<dbReference type="GO" id="GO:0016168">
    <property type="term" value="F:chlorophyll binding"/>
    <property type="evidence" value="ECO:0007669"/>
    <property type="project" value="UniProtKB-UniRule"/>
</dbReference>
<dbReference type="GO" id="GO:0045156">
    <property type="term" value="F:electron transporter, transferring electrons within the cyclic electron transport pathway of photosynthesis activity"/>
    <property type="evidence" value="ECO:0007669"/>
    <property type="project" value="InterPro"/>
</dbReference>
<dbReference type="GO" id="GO:0005506">
    <property type="term" value="F:iron ion binding"/>
    <property type="evidence" value="ECO:0007669"/>
    <property type="project" value="UniProtKB-UniRule"/>
</dbReference>
<dbReference type="GO" id="GO:0016682">
    <property type="term" value="F:oxidoreductase activity, acting on diphenols and related substances as donors, oxygen as acceptor"/>
    <property type="evidence" value="ECO:0007669"/>
    <property type="project" value="UniProtKB-UniRule"/>
</dbReference>
<dbReference type="GO" id="GO:0010242">
    <property type="term" value="F:oxygen evolving activity"/>
    <property type="evidence" value="ECO:0007669"/>
    <property type="project" value="UniProtKB-EC"/>
</dbReference>
<dbReference type="GO" id="GO:0009772">
    <property type="term" value="P:photosynthetic electron transport in photosystem II"/>
    <property type="evidence" value="ECO:0007669"/>
    <property type="project" value="InterPro"/>
</dbReference>
<dbReference type="GO" id="GO:0009635">
    <property type="term" value="P:response to herbicide"/>
    <property type="evidence" value="ECO:0007669"/>
    <property type="project" value="UniProtKB-KW"/>
</dbReference>
<dbReference type="CDD" id="cd09289">
    <property type="entry name" value="Photosystem-II_D1"/>
    <property type="match status" value="1"/>
</dbReference>
<dbReference type="FunFam" id="1.20.85.10:FF:000002">
    <property type="entry name" value="Photosystem II protein D1"/>
    <property type="match status" value="1"/>
</dbReference>
<dbReference type="Gene3D" id="1.20.85.10">
    <property type="entry name" value="Photosystem II protein D1-like"/>
    <property type="match status" value="2"/>
</dbReference>
<dbReference type="HAMAP" id="MF_01379">
    <property type="entry name" value="PSII_PsbA_D1"/>
    <property type="match status" value="1"/>
</dbReference>
<dbReference type="InterPro" id="IPR055266">
    <property type="entry name" value="D1/D2"/>
</dbReference>
<dbReference type="InterPro" id="IPR036854">
    <property type="entry name" value="Photo_II_D1/D2_sf"/>
</dbReference>
<dbReference type="InterPro" id="IPR000484">
    <property type="entry name" value="Photo_RC_L/M"/>
</dbReference>
<dbReference type="InterPro" id="IPR055265">
    <property type="entry name" value="Photo_RC_L/M_CS"/>
</dbReference>
<dbReference type="InterPro" id="IPR005867">
    <property type="entry name" value="PSII_D1"/>
</dbReference>
<dbReference type="NCBIfam" id="TIGR01151">
    <property type="entry name" value="psbA"/>
    <property type="match status" value="1"/>
</dbReference>
<dbReference type="PANTHER" id="PTHR33149:SF12">
    <property type="entry name" value="PHOTOSYSTEM II D2 PROTEIN"/>
    <property type="match status" value="1"/>
</dbReference>
<dbReference type="PANTHER" id="PTHR33149">
    <property type="entry name" value="PHOTOSYSTEM II PROTEIN D1"/>
    <property type="match status" value="1"/>
</dbReference>
<dbReference type="Pfam" id="PF00124">
    <property type="entry name" value="Photo_RC"/>
    <property type="match status" value="1"/>
</dbReference>
<dbReference type="PRINTS" id="PR00256">
    <property type="entry name" value="REACTNCENTRE"/>
</dbReference>
<dbReference type="SUPFAM" id="SSF81483">
    <property type="entry name" value="Bacterial photosystem II reaction centre, L and M subunits"/>
    <property type="match status" value="1"/>
</dbReference>
<dbReference type="PROSITE" id="PS00244">
    <property type="entry name" value="REACTION_CENTER"/>
    <property type="match status" value="1"/>
</dbReference>
<keyword id="KW-0106">Calcium</keyword>
<keyword id="KW-0148">Chlorophyll</keyword>
<keyword id="KW-0157">Chromophore</keyword>
<keyword id="KW-0249">Electron transport</keyword>
<keyword id="KW-0359">Herbicide resistance</keyword>
<keyword id="KW-0408">Iron</keyword>
<keyword id="KW-0460">Magnesium</keyword>
<keyword id="KW-0464">Manganese</keyword>
<keyword id="KW-0472">Membrane</keyword>
<keyword id="KW-0479">Metal-binding</keyword>
<keyword id="KW-0560">Oxidoreductase</keyword>
<keyword id="KW-0602">Photosynthesis</keyword>
<keyword id="KW-0604">Photosystem II</keyword>
<keyword id="KW-0793">Thylakoid</keyword>
<keyword id="KW-0812">Transmembrane</keyword>
<keyword id="KW-1133">Transmembrane helix</keyword>
<keyword id="KW-0813">Transport</keyword>
<gene>
    <name evidence="1 2" type="primary">psbA</name>
    <name type="synonym">psbA2</name>
</gene>
<protein>
    <recommendedName>
        <fullName evidence="1">Photosystem II protein D1</fullName>
        <shortName evidence="1">PSII D1 protein</shortName>
        <ecNumber evidence="1">1.10.3.9</ecNumber>
    </recommendedName>
    <alternativeName>
        <fullName evidence="1">Photosystem II Q(B) protein</fullName>
    </alternativeName>
</protein>
<comment type="function">
    <text evidence="1">Photosystem II (PSII) is a light-driven water:plastoquinone oxidoreductase that uses light energy to abstract electrons from H(2)O, generating O(2) and a proton gradient subsequently used for ATP formation. It consists of a core antenna complex that captures photons, and an electron transfer chain that converts photonic excitation into a charge separation. The D1/D2 (PsbA/PsbD) reaction center heterodimer binds P680, the primary electron donor of PSII as well as several subsequent electron acceptors.</text>
</comment>
<comment type="catalytic activity">
    <reaction evidence="1">
        <text>2 a plastoquinone + 4 hnu + 2 H2O = 2 a plastoquinol + O2</text>
        <dbReference type="Rhea" id="RHEA:36359"/>
        <dbReference type="Rhea" id="RHEA-COMP:9561"/>
        <dbReference type="Rhea" id="RHEA-COMP:9562"/>
        <dbReference type="ChEBI" id="CHEBI:15377"/>
        <dbReference type="ChEBI" id="CHEBI:15379"/>
        <dbReference type="ChEBI" id="CHEBI:17757"/>
        <dbReference type="ChEBI" id="CHEBI:30212"/>
        <dbReference type="ChEBI" id="CHEBI:62192"/>
        <dbReference type="EC" id="1.10.3.9"/>
    </reaction>
</comment>
<comment type="cofactor">
    <text evidence="1">The D1/D2 heterodimer binds P680, chlorophylls that are the primary electron donor of PSII, and subsequent electron acceptors. It shares a non-heme iron and each subunit binds pheophytin, quinone, additional chlorophylls, carotenoids and lipids. D1 provides most of the ligands for the Mn4-Ca-O5 cluster of the oxygen-evolving complex (OEC). There is also a Cl(-1) ion associated with D1 and D2, which is required for oxygen evolution. The PSII complex binds additional chlorophylls, carotenoids and specific lipids.</text>
</comment>
<comment type="subunit">
    <text evidence="1">PSII is composed of 1 copy each of membrane proteins PsbA, PsbB, PsbC, PsbD, PsbE, PsbF, PsbH, PsbI, PsbJ, PsbK, PsbL, PsbM, PsbT, PsbX, PsbY, PsbZ, Psb30/Ycf12, peripheral proteins PsbO, CyanoQ (PsbQ), PsbU, PsbV and a large number of cofactors. It forms dimeric complexes.</text>
</comment>
<comment type="subcellular location">
    <subcellularLocation>
        <location evidence="1">Cellular thylakoid membrane</location>
        <topology evidence="1">Multi-pass membrane protein</topology>
    </subcellularLocation>
</comment>
<comment type="PTM">
    <text evidence="1">Tyr-161 forms a radical intermediate that is referred to as redox-active TyrZ, YZ or Y-Z.</text>
</comment>
<comment type="PTM">
    <text evidence="1">C-terminally processed by CtpA; processing is essential to allow assembly of the oxygen-evolving complex and thus photosynthetic growth.</text>
</comment>
<comment type="miscellaneous">
    <text evidence="1">Cyanobacteria usually contain more than 2 copies of the psbA gene.</text>
</comment>
<comment type="miscellaneous">
    <text evidence="1">2 of the reaction center chlorophylls (ChlD1 and ChlD2) are entirely coordinated by water.</text>
</comment>
<comment type="miscellaneous">
    <text evidence="1">Herbicides such as atrazine, BNT, diuron or ioxynil bind in the Q(B) binding site and block subsequent electron transfer.</text>
</comment>
<comment type="similarity">
    <text evidence="1">Belongs to the reaction center PufL/M/PsbA/D family.</text>
</comment>